<protein>
    <recommendedName>
        <fullName evidence="1">Probable potassium transport system protein Kup</fullName>
    </recommendedName>
</protein>
<keyword id="KW-0997">Cell inner membrane</keyword>
<keyword id="KW-1003">Cell membrane</keyword>
<keyword id="KW-0406">Ion transport</keyword>
<keyword id="KW-0472">Membrane</keyword>
<keyword id="KW-0630">Potassium</keyword>
<keyword id="KW-0633">Potassium transport</keyword>
<keyword id="KW-1185">Reference proteome</keyword>
<keyword id="KW-0769">Symport</keyword>
<keyword id="KW-0812">Transmembrane</keyword>
<keyword id="KW-1133">Transmembrane helix</keyword>
<keyword id="KW-0813">Transport</keyword>
<gene>
    <name evidence="1" type="primary">kup</name>
    <name type="ordered locus">AZOSEA20460</name>
    <name type="ORF">ebA3621</name>
</gene>
<feature type="chain" id="PRO_0000208991" description="Probable potassium transport system protein Kup">
    <location>
        <begin position="1"/>
        <end position="640"/>
    </location>
</feature>
<feature type="transmembrane region" description="Helical" evidence="1">
    <location>
        <begin position="26"/>
        <end position="46"/>
    </location>
</feature>
<feature type="transmembrane region" description="Helical" evidence="1">
    <location>
        <begin position="69"/>
        <end position="89"/>
    </location>
</feature>
<feature type="transmembrane region" description="Helical" evidence="1">
    <location>
        <begin position="117"/>
        <end position="137"/>
    </location>
</feature>
<feature type="transmembrane region" description="Helical" evidence="1">
    <location>
        <begin position="155"/>
        <end position="175"/>
    </location>
</feature>
<feature type="transmembrane region" description="Helical" evidence="1">
    <location>
        <begin position="186"/>
        <end position="206"/>
    </location>
</feature>
<feature type="transmembrane region" description="Helical" evidence="1">
    <location>
        <begin position="224"/>
        <end position="244"/>
    </location>
</feature>
<feature type="transmembrane region" description="Helical" evidence="1">
    <location>
        <begin position="265"/>
        <end position="285"/>
    </location>
</feature>
<feature type="transmembrane region" description="Helical" evidence="1">
    <location>
        <begin position="297"/>
        <end position="317"/>
    </location>
</feature>
<feature type="transmembrane region" description="Helical" evidence="1">
    <location>
        <begin position="355"/>
        <end position="375"/>
    </location>
</feature>
<feature type="transmembrane region" description="Helical" evidence="1">
    <location>
        <begin position="384"/>
        <end position="404"/>
    </location>
</feature>
<feature type="transmembrane region" description="Helical" evidence="1">
    <location>
        <begin position="415"/>
        <end position="435"/>
    </location>
</feature>
<feature type="transmembrane region" description="Helical" evidence="1">
    <location>
        <begin position="437"/>
        <end position="457"/>
    </location>
</feature>
<comment type="function">
    <text evidence="1">Transport of potassium into the cell. Likely operates as a K(+):H(+) symporter.</text>
</comment>
<comment type="catalytic activity">
    <reaction evidence="1">
        <text>K(+)(in) + H(+)(in) = K(+)(out) + H(+)(out)</text>
        <dbReference type="Rhea" id="RHEA:28490"/>
        <dbReference type="ChEBI" id="CHEBI:15378"/>
        <dbReference type="ChEBI" id="CHEBI:29103"/>
    </reaction>
    <physiologicalReaction direction="right-to-left" evidence="1">
        <dbReference type="Rhea" id="RHEA:28492"/>
    </physiologicalReaction>
</comment>
<comment type="subcellular location">
    <subcellularLocation>
        <location evidence="1">Cell inner membrane</location>
        <topology evidence="1">Multi-pass membrane protein</topology>
    </subcellularLocation>
</comment>
<comment type="similarity">
    <text evidence="1">Belongs to the HAK/KUP transporter (TC 2.A.72) family.</text>
</comment>
<accession>Q5P3E3</accession>
<evidence type="ECO:0000255" key="1">
    <source>
        <dbReference type="HAMAP-Rule" id="MF_01522"/>
    </source>
</evidence>
<sequence>MQALEGVNTSPAAAAAAHAPAPRRGIAGLAVAAVGVVYGDIGTSPLYTLKEVFNGPHAVPVTPQNVYGILSLVFWALVLVVSAKYVLFITRADNRGEGGIMALTSLVLRAVPPGRKAWVLSALGVFGAALFYGDGMITPAISVLSAVEGLEVATPAFRPYVLPIALAVLCGLFVIQRHGTGSVGRIFGPVMLVWFVLLAVLGIAGITLHPEIIGALDPRWALRFFADMPLVGWLSLGAVVLAITGGEALYADMGHFGRRPIKFAWFLVVFPSLYLNYLGQGALILDHPDNVRNPFYLLVPDALVYPMVAMATLATIIASQAVISGAYSLTRQAMQLGYAPRMRTIFTSEREMGQIYVPSINWMLLGAVVALVVGFRSSSALASAYGIAVTLTMMIDTLLAFVVVRALWGWGRLQAGLFLGVFLAVDVAFFSATTVKILAGGWFPLLVGALIFTLLTTWKRGRELLNRRLRTDTIPLDTFIRSMFNSPSPRVDGTAVFLTTWLEGVPRALLHNLVHNKVLHHRVVLLTVETADVPHVPDSERVAVEELDYGFYRVRVNYGFKDDPDLPAALVRCADFGLKFAMMETSFFLGRETLVSRVGSGMPRWREKLFIVMFRNAGSAADYFHIPPNRVVELGTQVEL</sequence>
<organism>
    <name type="scientific">Aromatoleum aromaticum (strain DSM 19018 / LMG 30748 / EbN1)</name>
    <name type="common">Azoarcus sp. (strain EbN1)</name>
    <dbReference type="NCBI Taxonomy" id="76114"/>
    <lineage>
        <taxon>Bacteria</taxon>
        <taxon>Pseudomonadati</taxon>
        <taxon>Pseudomonadota</taxon>
        <taxon>Betaproteobacteria</taxon>
        <taxon>Rhodocyclales</taxon>
        <taxon>Rhodocyclaceae</taxon>
        <taxon>Aromatoleum</taxon>
    </lineage>
</organism>
<name>KUP_AROAE</name>
<reference key="1">
    <citation type="journal article" date="2005" name="Arch. Microbiol.">
        <title>The genome sequence of an anaerobic aromatic-degrading denitrifying bacterium, strain EbN1.</title>
        <authorList>
            <person name="Rabus R."/>
            <person name="Kube M."/>
            <person name="Heider J."/>
            <person name="Beck A."/>
            <person name="Heitmann K."/>
            <person name="Widdel F."/>
            <person name="Reinhardt R."/>
        </authorList>
    </citation>
    <scope>NUCLEOTIDE SEQUENCE [LARGE SCALE GENOMIC DNA]</scope>
    <source>
        <strain>DSM 19018 / LMG 30748 / EbN1</strain>
    </source>
</reference>
<dbReference type="EMBL" id="CR555306">
    <property type="protein sequence ID" value="CAI08171.1"/>
    <property type="molecule type" value="Genomic_DNA"/>
</dbReference>
<dbReference type="RefSeq" id="WP_011237864.1">
    <property type="nucleotide sequence ID" value="NC_006513.1"/>
</dbReference>
<dbReference type="STRING" id="76114.ebA3621"/>
<dbReference type="KEGG" id="eba:ebA3621"/>
<dbReference type="eggNOG" id="COG3158">
    <property type="taxonomic scope" value="Bacteria"/>
</dbReference>
<dbReference type="HOGENOM" id="CLU_008142_4_2_4"/>
<dbReference type="OrthoDB" id="9805577at2"/>
<dbReference type="Proteomes" id="UP000006552">
    <property type="component" value="Chromosome"/>
</dbReference>
<dbReference type="GO" id="GO:0005886">
    <property type="term" value="C:plasma membrane"/>
    <property type="evidence" value="ECO:0007669"/>
    <property type="project" value="UniProtKB-SubCell"/>
</dbReference>
<dbReference type="GO" id="GO:0015079">
    <property type="term" value="F:potassium ion transmembrane transporter activity"/>
    <property type="evidence" value="ECO:0007669"/>
    <property type="project" value="UniProtKB-UniRule"/>
</dbReference>
<dbReference type="GO" id="GO:0015293">
    <property type="term" value="F:symporter activity"/>
    <property type="evidence" value="ECO:0007669"/>
    <property type="project" value="UniProtKB-UniRule"/>
</dbReference>
<dbReference type="HAMAP" id="MF_01522">
    <property type="entry name" value="Kup"/>
    <property type="match status" value="1"/>
</dbReference>
<dbReference type="InterPro" id="IPR003855">
    <property type="entry name" value="K+_transporter"/>
</dbReference>
<dbReference type="InterPro" id="IPR053952">
    <property type="entry name" value="K_trans_C"/>
</dbReference>
<dbReference type="InterPro" id="IPR053951">
    <property type="entry name" value="K_trans_N"/>
</dbReference>
<dbReference type="InterPro" id="IPR023051">
    <property type="entry name" value="Kup"/>
</dbReference>
<dbReference type="PANTHER" id="PTHR30540:SF79">
    <property type="entry name" value="LOW AFFINITY POTASSIUM TRANSPORT SYSTEM PROTEIN KUP"/>
    <property type="match status" value="1"/>
</dbReference>
<dbReference type="PANTHER" id="PTHR30540">
    <property type="entry name" value="OSMOTIC STRESS POTASSIUM TRANSPORTER"/>
    <property type="match status" value="1"/>
</dbReference>
<dbReference type="Pfam" id="PF02705">
    <property type="entry name" value="K_trans"/>
    <property type="match status" value="1"/>
</dbReference>
<dbReference type="Pfam" id="PF22776">
    <property type="entry name" value="K_trans_C"/>
    <property type="match status" value="1"/>
</dbReference>
<proteinExistence type="inferred from homology"/>